<comment type="function">
    <text evidence="1">Involved in protein export. Acts as a chaperone by maintaining the newly synthesized protein in an open conformation. Functions as a peptidyl-prolyl cis-trans isomerase.</text>
</comment>
<comment type="catalytic activity">
    <reaction evidence="1">
        <text>[protein]-peptidylproline (omega=180) = [protein]-peptidylproline (omega=0)</text>
        <dbReference type="Rhea" id="RHEA:16237"/>
        <dbReference type="Rhea" id="RHEA-COMP:10747"/>
        <dbReference type="Rhea" id="RHEA-COMP:10748"/>
        <dbReference type="ChEBI" id="CHEBI:83833"/>
        <dbReference type="ChEBI" id="CHEBI:83834"/>
        <dbReference type="EC" id="5.2.1.8"/>
    </reaction>
</comment>
<comment type="subcellular location">
    <subcellularLocation>
        <location>Cytoplasm</location>
    </subcellularLocation>
    <text evidence="1">About half TF is bound to the ribosome near the polypeptide exit tunnel while the other half is free in the cytoplasm.</text>
</comment>
<comment type="domain">
    <text evidence="1">Consists of 3 domains; the N-terminus binds the ribosome, the middle domain has PPIase activity, while the C-terminus has intrinsic chaperone activity on its own.</text>
</comment>
<comment type="similarity">
    <text evidence="1">Belongs to the FKBP-type PPIase family. Tig subfamily.</text>
</comment>
<sequence>MSNVIENLGKLDRKVTLAIPKAEVEKEKQERLVRLSKTVKMSGFRPGKVPMKMVEKQYGQQVEFEVRFDKAARKFFDITKEQDVKVAGQPKFEIKNEGVGEDEVAFDATFEVYPEVTIGDLSAAEVTRTSTEITDAEVDKTIDILRKQRVHYHARGESGEHGDGGADVTAQNGDRVTVDFVGKIDGVEFAGGKAEDFPFVLGEGRMLPEFEQATLGLKVGESKTFPLAFPADYHGKEVAGKTAEFTVTLKKVEWAHLPEVNEAFAKSLGIADGSVEKMRADIRENLEREVKRRTHAMLKDQVMEALLKASELDVPKALIEQDQERLVEMARRDLEQRGMPNAKDMPIPAEMFAQQAERRVKLGLILAEIVKANGLEAKADQIKAEIEDFAKSYEDPKEVMRWYYGDQQRLAEMEAYVLENNVVNFVCDKAKVTDKKVSFEELTAEGNAQQA</sequence>
<accession>B3R4W0</accession>
<proteinExistence type="inferred from homology"/>
<evidence type="ECO:0000255" key="1">
    <source>
        <dbReference type="HAMAP-Rule" id="MF_00303"/>
    </source>
</evidence>
<feature type="chain" id="PRO_1000115526" description="Trigger factor">
    <location>
        <begin position="1"/>
        <end position="451"/>
    </location>
</feature>
<feature type="domain" description="PPIase FKBP-type" evidence="1">
    <location>
        <begin position="173"/>
        <end position="258"/>
    </location>
</feature>
<dbReference type="EC" id="5.2.1.8" evidence="1"/>
<dbReference type="EMBL" id="CU633749">
    <property type="protein sequence ID" value="CAQ69343.1"/>
    <property type="molecule type" value="Genomic_DNA"/>
</dbReference>
<dbReference type="RefSeq" id="WP_012352667.1">
    <property type="nucleotide sequence ID" value="NC_010528.1"/>
</dbReference>
<dbReference type="SMR" id="B3R4W0"/>
<dbReference type="GeneID" id="29761887"/>
<dbReference type="KEGG" id="cti:RALTA_A1389"/>
<dbReference type="eggNOG" id="COG0544">
    <property type="taxonomic scope" value="Bacteria"/>
</dbReference>
<dbReference type="HOGENOM" id="CLU_033058_2_0_4"/>
<dbReference type="BioCyc" id="CTAI977880:RALTA_RS06655-MONOMER"/>
<dbReference type="Proteomes" id="UP000001692">
    <property type="component" value="Chromosome 1"/>
</dbReference>
<dbReference type="GO" id="GO:0005737">
    <property type="term" value="C:cytoplasm"/>
    <property type="evidence" value="ECO:0007669"/>
    <property type="project" value="UniProtKB-SubCell"/>
</dbReference>
<dbReference type="GO" id="GO:0003755">
    <property type="term" value="F:peptidyl-prolyl cis-trans isomerase activity"/>
    <property type="evidence" value="ECO:0007669"/>
    <property type="project" value="UniProtKB-UniRule"/>
</dbReference>
<dbReference type="GO" id="GO:0044183">
    <property type="term" value="F:protein folding chaperone"/>
    <property type="evidence" value="ECO:0007669"/>
    <property type="project" value="TreeGrafter"/>
</dbReference>
<dbReference type="GO" id="GO:0043022">
    <property type="term" value="F:ribosome binding"/>
    <property type="evidence" value="ECO:0007669"/>
    <property type="project" value="TreeGrafter"/>
</dbReference>
<dbReference type="GO" id="GO:0051083">
    <property type="term" value="P:'de novo' cotranslational protein folding"/>
    <property type="evidence" value="ECO:0007669"/>
    <property type="project" value="TreeGrafter"/>
</dbReference>
<dbReference type="GO" id="GO:0051301">
    <property type="term" value="P:cell division"/>
    <property type="evidence" value="ECO:0007669"/>
    <property type="project" value="UniProtKB-KW"/>
</dbReference>
<dbReference type="GO" id="GO:0061077">
    <property type="term" value="P:chaperone-mediated protein folding"/>
    <property type="evidence" value="ECO:0007669"/>
    <property type="project" value="TreeGrafter"/>
</dbReference>
<dbReference type="GO" id="GO:0015031">
    <property type="term" value="P:protein transport"/>
    <property type="evidence" value="ECO:0007669"/>
    <property type="project" value="UniProtKB-UniRule"/>
</dbReference>
<dbReference type="GO" id="GO:0043335">
    <property type="term" value="P:protein unfolding"/>
    <property type="evidence" value="ECO:0007669"/>
    <property type="project" value="TreeGrafter"/>
</dbReference>
<dbReference type="FunFam" id="3.10.50.40:FF:000001">
    <property type="entry name" value="Trigger factor"/>
    <property type="match status" value="1"/>
</dbReference>
<dbReference type="Gene3D" id="3.10.50.40">
    <property type="match status" value="1"/>
</dbReference>
<dbReference type="Gene3D" id="3.30.70.1050">
    <property type="entry name" value="Trigger factor ribosome-binding domain"/>
    <property type="match status" value="1"/>
</dbReference>
<dbReference type="Gene3D" id="1.10.3120.10">
    <property type="entry name" value="Trigger factor, C-terminal domain"/>
    <property type="match status" value="1"/>
</dbReference>
<dbReference type="HAMAP" id="MF_00303">
    <property type="entry name" value="Trigger_factor_Tig"/>
    <property type="match status" value="1"/>
</dbReference>
<dbReference type="InterPro" id="IPR046357">
    <property type="entry name" value="PPIase_dom_sf"/>
</dbReference>
<dbReference type="InterPro" id="IPR001179">
    <property type="entry name" value="PPIase_FKBP_dom"/>
</dbReference>
<dbReference type="InterPro" id="IPR005215">
    <property type="entry name" value="Trig_fac"/>
</dbReference>
<dbReference type="InterPro" id="IPR008880">
    <property type="entry name" value="Trigger_fac_C"/>
</dbReference>
<dbReference type="InterPro" id="IPR037041">
    <property type="entry name" value="Trigger_fac_C_sf"/>
</dbReference>
<dbReference type="InterPro" id="IPR008881">
    <property type="entry name" value="Trigger_fac_ribosome-bd_bac"/>
</dbReference>
<dbReference type="InterPro" id="IPR036611">
    <property type="entry name" value="Trigger_fac_ribosome-bd_sf"/>
</dbReference>
<dbReference type="InterPro" id="IPR027304">
    <property type="entry name" value="Trigger_fact/SurA_dom_sf"/>
</dbReference>
<dbReference type="NCBIfam" id="TIGR00115">
    <property type="entry name" value="tig"/>
    <property type="match status" value="1"/>
</dbReference>
<dbReference type="PANTHER" id="PTHR30560">
    <property type="entry name" value="TRIGGER FACTOR CHAPERONE AND PEPTIDYL-PROLYL CIS/TRANS ISOMERASE"/>
    <property type="match status" value="1"/>
</dbReference>
<dbReference type="PANTHER" id="PTHR30560:SF3">
    <property type="entry name" value="TRIGGER FACTOR-LIKE PROTEIN TIG, CHLOROPLASTIC"/>
    <property type="match status" value="1"/>
</dbReference>
<dbReference type="Pfam" id="PF00254">
    <property type="entry name" value="FKBP_C"/>
    <property type="match status" value="1"/>
</dbReference>
<dbReference type="Pfam" id="PF05698">
    <property type="entry name" value="Trigger_C"/>
    <property type="match status" value="1"/>
</dbReference>
<dbReference type="Pfam" id="PF05697">
    <property type="entry name" value="Trigger_N"/>
    <property type="match status" value="1"/>
</dbReference>
<dbReference type="PIRSF" id="PIRSF003095">
    <property type="entry name" value="Trigger_factor"/>
    <property type="match status" value="1"/>
</dbReference>
<dbReference type="SUPFAM" id="SSF54534">
    <property type="entry name" value="FKBP-like"/>
    <property type="match status" value="1"/>
</dbReference>
<dbReference type="SUPFAM" id="SSF109998">
    <property type="entry name" value="Triger factor/SurA peptide-binding domain-like"/>
    <property type="match status" value="1"/>
</dbReference>
<dbReference type="SUPFAM" id="SSF102735">
    <property type="entry name" value="Trigger factor ribosome-binding domain"/>
    <property type="match status" value="1"/>
</dbReference>
<dbReference type="PROSITE" id="PS50059">
    <property type="entry name" value="FKBP_PPIASE"/>
    <property type="match status" value="1"/>
</dbReference>
<name>TIG_CUPTR</name>
<gene>
    <name evidence="1" type="primary">tig</name>
    <name type="ordered locus">RALTA_A1389</name>
</gene>
<keyword id="KW-0131">Cell cycle</keyword>
<keyword id="KW-0132">Cell division</keyword>
<keyword id="KW-0143">Chaperone</keyword>
<keyword id="KW-0963">Cytoplasm</keyword>
<keyword id="KW-0413">Isomerase</keyword>
<keyword id="KW-0697">Rotamase</keyword>
<organism>
    <name type="scientific">Cupriavidus taiwanensis (strain DSM 17343 / BCRC 17206 / CCUG 44338 / CIP 107171 / LMG 19424 / R1)</name>
    <name type="common">Ralstonia taiwanensis (strain LMG 19424)</name>
    <dbReference type="NCBI Taxonomy" id="977880"/>
    <lineage>
        <taxon>Bacteria</taxon>
        <taxon>Pseudomonadati</taxon>
        <taxon>Pseudomonadota</taxon>
        <taxon>Betaproteobacteria</taxon>
        <taxon>Burkholderiales</taxon>
        <taxon>Burkholderiaceae</taxon>
        <taxon>Cupriavidus</taxon>
    </lineage>
</organism>
<protein>
    <recommendedName>
        <fullName evidence="1">Trigger factor</fullName>
        <shortName evidence="1">TF</shortName>
        <ecNumber evidence="1">5.2.1.8</ecNumber>
    </recommendedName>
    <alternativeName>
        <fullName evidence="1">PPIase</fullName>
    </alternativeName>
</protein>
<reference key="1">
    <citation type="journal article" date="2008" name="Genome Res.">
        <title>Genome sequence of the beta-rhizobium Cupriavidus taiwanensis and comparative genomics of rhizobia.</title>
        <authorList>
            <person name="Amadou C."/>
            <person name="Pascal G."/>
            <person name="Mangenot S."/>
            <person name="Glew M."/>
            <person name="Bontemps C."/>
            <person name="Capela D."/>
            <person name="Carrere S."/>
            <person name="Cruveiller S."/>
            <person name="Dossat C."/>
            <person name="Lajus A."/>
            <person name="Marchetti M."/>
            <person name="Poinsot V."/>
            <person name="Rouy Z."/>
            <person name="Servin B."/>
            <person name="Saad M."/>
            <person name="Schenowitz C."/>
            <person name="Barbe V."/>
            <person name="Batut J."/>
            <person name="Medigue C."/>
            <person name="Masson-Boivin C."/>
        </authorList>
    </citation>
    <scope>NUCLEOTIDE SEQUENCE [LARGE SCALE GENOMIC DNA]</scope>
    <source>
        <strain>DSM 17343 / BCRC 17206 / CCUG 44338 / CIP 107171 / LMG 19424 / R1</strain>
    </source>
</reference>